<keyword id="KW-0028">Amino-acid biosynthesis</keyword>
<keyword id="KW-0378">Hydrolase</keyword>
<keyword id="KW-0460">Magnesium</keyword>
<keyword id="KW-0479">Metal-binding</keyword>
<keyword id="KW-0486">Methionine biosynthesis</keyword>
<organism>
    <name type="scientific">Serratia proteamaculans (strain 568)</name>
    <dbReference type="NCBI Taxonomy" id="399741"/>
    <lineage>
        <taxon>Bacteria</taxon>
        <taxon>Pseudomonadati</taxon>
        <taxon>Pseudomonadota</taxon>
        <taxon>Gammaproteobacteria</taxon>
        <taxon>Enterobacterales</taxon>
        <taxon>Yersiniaceae</taxon>
        <taxon>Serratia</taxon>
    </lineage>
</organism>
<gene>
    <name evidence="1" type="primary">mtnC</name>
    <name type="ordered locus">Spro_0943</name>
</gene>
<accession>A8GAA9</accession>
<name>MTNC_SERP5</name>
<sequence>MIRAIVTDIEGTTSDIRFVHQVLFPYARERLATFLRLHAEDAEVAAPLTALRQELDQPQADIEQLIAALYRFMDEDRKSTALKALQGIIWRSGYQNGDFRGHLYPEVAGQLAAWQQQGLKLYVYSSGSVEAQKLLFGYSDAGDLQPLFSGYFDTHVGAKRETASYLNIAGKIGIAADELLFLSDIHQELDAARAAGWHTCQLIRDEADSQSQHPQVNRFDQIDLGEFAS</sequence>
<dbReference type="EC" id="3.1.3.77" evidence="1"/>
<dbReference type="EMBL" id="CP000826">
    <property type="protein sequence ID" value="ABV40049.1"/>
    <property type="molecule type" value="Genomic_DNA"/>
</dbReference>
<dbReference type="SMR" id="A8GAA9"/>
<dbReference type="STRING" id="399741.Spro_0943"/>
<dbReference type="KEGG" id="spe:Spro_0943"/>
<dbReference type="eggNOG" id="COG4229">
    <property type="taxonomic scope" value="Bacteria"/>
</dbReference>
<dbReference type="HOGENOM" id="CLU_023273_0_0_6"/>
<dbReference type="OrthoDB" id="9797416at2"/>
<dbReference type="UniPathway" id="UPA00904">
    <property type="reaction ID" value="UER00876"/>
</dbReference>
<dbReference type="UniPathway" id="UPA00904">
    <property type="reaction ID" value="UER00877"/>
</dbReference>
<dbReference type="GO" id="GO:0043715">
    <property type="term" value="F:2,3-diketo-5-methylthiopentyl-1-phosphate enolase activity"/>
    <property type="evidence" value="ECO:0007669"/>
    <property type="project" value="UniProtKB-UniRule"/>
</dbReference>
<dbReference type="GO" id="GO:0043716">
    <property type="term" value="F:2-hydroxy-3-keto-5-methylthiopentenyl-1-phosphate phosphatase activity"/>
    <property type="evidence" value="ECO:0007669"/>
    <property type="project" value="UniProtKB-UniRule"/>
</dbReference>
<dbReference type="GO" id="GO:0043874">
    <property type="term" value="F:acireductone synthase activity"/>
    <property type="evidence" value="ECO:0007669"/>
    <property type="project" value="UniProtKB-EC"/>
</dbReference>
<dbReference type="GO" id="GO:0000287">
    <property type="term" value="F:magnesium ion binding"/>
    <property type="evidence" value="ECO:0007669"/>
    <property type="project" value="UniProtKB-UniRule"/>
</dbReference>
<dbReference type="GO" id="GO:0019509">
    <property type="term" value="P:L-methionine salvage from methylthioadenosine"/>
    <property type="evidence" value="ECO:0007669"/>
    <property type="project" value="UniProtKB-UniRule"/>
</dbReference>
<dbReference type="CDD" id="cd01629">
    <property type="entry name" value="HAD_EP"/>
    <property type="match status" value="1"/>
</dbReference>
<dbReference type="Gene3D" id="1.10.720.60">
    <property type="match status" value="1"/>
</dbReference>
<dbReference type="Gene3D" id="3.40.50.1000">
    <property type="entry name" value="HAD superfamily/HAD-like"/>
    <property type="match status" value="1"/>
</dbReference>
<dbReference type="HAMAP" id="MF_01681">
    <property type="entry name" value="Salvage_MtnC"/>
    <property type="match status" value="1"/>
</dbReference>
<dbReference type="InterPro" id="IPR023943">
    <property type="entry name" value="Enolase-ppase_E1"/>
</dbReference>
<dbReference type="InterPro" id="IPR036412">
    <property type="entry name" value="HAD-like_sf"/>
</dbReference>
<dbReference type="InterPro" id="IPR006439">
    <property type="entry name" value="HAD-SF_hydro_IA"/>
</dbReference>
<dbReference type="InterPro" id="IPR023214">
    <property type="entry name" value="HAD_sf"/>
</dbReference>
<dbReference type="NCBIfam" id="TIGR01691">
    <property type="entry name" value="enolase-ppase"/>
    <property type="match status" value="1"/>
</dbReference>
<dbReference type="NCBIfam" id="TIGR01549">
    <property type="entry name" value="HAD-SF-IA-v1"/>
    <property type="match status" value="1"/>
</dbReference>
<dbReference type="PANTHER" id="PTHR20371">
    <property type="entry name" value="ENOLASE-PHOSPHATASE E1"/>
    <property type="match status" value="1"/>
</dbReference>
<dbReference type="PANTHER" id="PTHR20371:SF1">
    <property type="entry name" value="ENOLASE-PHOSPHATASE E1"/>
    <property type="match status" value="1"/>
</dbReference>
<dbReference type="Pfam" id="PF00702">
    <property type="entry name" value="Hydrolase"/>
    <property type="match status" value="1"/>
</dbReference>
<dbReference type="PRINTS" id="PR00413">
    <property type="entry name" value="HADHALOGNASE"/>
</dbReference>
<dbReference type="SFLD" id="SFLDF00044">
    <property type="entry name" value="enolase-phosphatase"/>
    <property type="match status" value="1"/>
</dbReference>
<dbReference type="SFLD" id="SFLDS00003">
    <property type="entry name" value="Haloacid_Dehalogenase"/>
    <property type="match status" value="1"/>
</dbReference>
<dbReference type="SUPFAM" id="SSF56784">
    <property type="entry name" value="HAD-like"/>
    <property type="match status" value="1"/>
</dbReference>
<protein>
    <recommendedName>
        <fullName evidence="1">Enolase-phosphatase E1</fullName>
        <ecNumber evidence="1">3.1.3.77</ecNumber>
    </recommendedName>
    <alternativeName>
        <fullName evidence="1">2,3-diketo-5-methylthio-1-phosphopentane phosphatase</fullName>
    </alternativeName>
</protein>
<reference key="1">
    <citation type="submission" date="2007-09" db="EMBL/GenBank/DDBJ databases">
        <title>Complete sequence of chromosome of Serratia proteamaculans 568.</title>
        <authorList>
            <consortium name="US DOE Joint Genome Institute"/>
            <person name="Copeland A."/>
            <person name="Lucas S."/>
            <person name="Lapidus A."/>
            <person name="Barry K."/>
            <person name="Glavina del Rio T."/>
            <person name="Dalin E."/>
            <person name="Tice H."/>
            <person name="Pitluck S."/>
            <person name="Chain P."/>
            <person name="Malfatti S."/>
            <person name="Shin M."/>
            <person name="Vergez L."/>
            <person name="Schmutz J."/>
            <person name="Larimer F."/>
            <person name="Land M."/>
            <person name="Hauser L."/>
            <person name="Kyrpides N."/>
            <person name="Kim E."/>
            <person name="Taghavi S."/>
            <person name="Newman L."/>
            <person name="Vangronsveld J."/>
            <person name="van der Lelie D."/>
            <person name="Richardson P."/>
        </authorList>
    </citation>
    <scope>NUCLEOTIDE SEQUENCE [LARGE SCALE GENOMIC DNA]</scope>
    <source>
        <strain>568</strain>
    </source>
</reference>
<proteinExistence type="inferred from homology"/>
<comment type="function">
    <text evidence="1">Bifunctional enzyme that catalyzes the enolization of 2,3-diketo-5-methylthiopentyl-1-phosphate (DK-MTP-1-P) into the intermediate 2-hydroxy-3-keto-5-methylthiopentenyl-1-phosphate (HK-MTPenyl-1-P), which is then dephosphorylated to form the acireductone 1,2-dihydroxy-3-keto-5-methylthiopentene (DHK-MTPene).</text>
</comment>
<comment type="catalytic activity">
    <reaction evidence="1">
        <text>5-methylsulfanyl-2,3-dioxopentyl phosphate + H2O = 1,2-dihydroxy-5-(methylsulfanyl)pent-1-en-3-one + phosphate</text>
        <dbReference type="Rhea" id="RHEA:21700"/>
        <dbReference type="ChEBI" id="CHEBI:15377"/>
        <dbReference type="ChEBI" id="CHEBI:43474"/>
        <dbReference type="ChEBI" id="CHEBI:49252"/>
        <dbReference type="ChEBI" id="CHEBI:58828"/>
        <dbReference type="EC" id="3.1.3.77"/>
    </reaction>
</comment>
<comment type="cofactor">
    <cofactor evidence="1">
        <name>Mg(2+)</name>
        <dbReference type="ChEBI" id="CHEBI:18420"/>
    </cofactor>
    <text evidence="1">Binds 1 Mg(2+) ion per subunit.</text>
</comment>
<comment type="pathway">
    <text evidence="1">Amino-acid biosynthesis; L-methionine biosynthesis via salvage pathway; L-methionine from S-methyl-5-thio-alpha-D-ribose 1-phosphate: step 3/6.</text>
</comment>
<comment type="pathway">
    <text evidence="1">Amino-acid biosynthesis; L-methionine biosynthesis via salvage pathway; L-methionine from S-methyl-5-thio-alpha-D-ribose 1-phosphate: step 4/6.</text>
</comment>
<comment type="subunit">
    <text evidence="1">Monomer.</text>
</comment>
<comment type="similarity">
    <text evidence="1">Belongs to the HAD-like hydrolase superfamily. MasA/MtnC family.</text>
</comment>
<feature type="chain" id="PRO_0000357395" description="Enolase-phosphatase E1">
    <location>
        <begin position="1"/>
        <end position="229"/>
    </location>
</feature>
<evidence type="ECO:0000255" key="1">
    <source>
        <dbReference type="HAMAP-Rule" id="MF_01681"/>
    </source>
</evidence>